<dbReference type="EC" id="2.7.7.8" evidence="1"/>
<dbReference type="EMBL" id="AE016825">
    <property type="protein sequence ID" value="AAQ59141.1"/>
    <property type="molecule type" value="Genomic_DNA"/>
</dbReference>
<dbReference type="SMR" id="Q7NY10"/>
<dbReference type="STRING" id="243365.CV_1466"/>
<dbReference type="KEGG" id="cvi:CV_1466"/>
<dbReference type="eggNOG" id="COG1185">
    <property type="taxonomic scope" value="Bacteria"/>
</dbReference>
<dbReference type="HOGENOM" id="CLU_004217_2_2_4"/>
<dbReference type="OrthoDB" id="9804305at2"/>
<dbReference type="Proteomes" id="UP000001424">
    <property type="component" value="Chromosome"/>
</dbReference>
<dbReference type="GO" id="GO:0005829">
    <property type="term" value="C:cytosol"/>
    <property type="evidence" value="ECO:0007669"/>
    <property type="project" value="TreeGrafter"/>
</dbReference>
<dbReference type="GO" id="GO:0000175">
    <property type="term" value="F:3'-5'-RNA exonuclease activity"/>
    <property type="evidence" value="ECO:0007669"/>
    <property type="project" value="TreeGrafter"/>
</dbReference>
<dbReference type="GO" id="GO:0000287">
    <property type="term" value="F:magnesium ion binding"/>
    <property type="evidence" value="ECO:0007669"/>
    <property type="project" value="UniProtKB-UniRule"/>
</dbReference>
<dbReference type="GO" id="GO:0004654">
    <property type="term" value="F:polyribonucleotide nucleotidyltransferase activity"/>
    <property type="evidence" value="ECO:0007669"/>
    <property type="project" value="UniProtKB-UniRule"/>
</dbReference>
<dbReference type="GO" id="GO:0003723">
    <property type="term" value="F:RNA binding"/>
    <property type="evidence" value="ECO:0007669"/>
    <property type="project" value="UniProtKB-UniRule"/>
</dbReference>
<dbReference type="GO" id="GO:0006402">
    <property type="term" value="P:mRNA catabolic process"/>
    <property type="evidence" value="ECO:0007669"/>
    <property type="project" value="UniProtKB-UniRule"/>
</dbReference>
<dbReference type="GO" id="GO:0006396">
    <property type="term" value="P:RNA processing"/>
    <property type="evidence" value="ECO:0007669"/>
    <property type="project" value="InterPro"/>
</dbReference>
<dbReference type="CDD" id="cd02393">
    <property type="entry name" value="KH-I_PNPase"/>
    <property type="match status" value="1"/>
</dbReference>
<dbReference type="CDD" id="cd11363">
    <property type="entry name" value="RNase_PH_PNPase_1"/>
    <property type="match status" value="1"/>
</dbReference>
<dbReference type="CDD" id="cd11364">
    <property type="entry name" value="RNase_PH_PNPase_2"/>
    <property type="match status" value="1"/>
</dbReference>
<dbReference type="CDD" id="cd04472">
    <property type="entry name" value="S1_PNPase"/>
    <property type="match status" value="1"/>
</dbReference>
<dbReference type="FunFam" id="3.30.1370.10:FF:000001">
    <property type="entry name" value="Polyribonucleotide nucleotidyltransferase"/>
    <property type="match status" value="1"/>
</dbReference>
<dbReference type="FunFam" id="3.30.230.70:FF:000001">
    <property type="entry name" value="Polyribonucleotide nucleotidyltransferase"/>
    <property type="match status" value="1"/>
</dbReference>
<dbReference type="FunFam" id="3.30.230.70:FF:000002">
    <property type="entry name" value="Polyribonucleotide nucleotidyltransferase"/>
    <property type="match status" value="1"/>
</dbReference>
<dbReference type="Gene3D" id="3.30.230.70">
    <property type="entry name" value="GHMP Kinase, N-terminal domain"/>
    <property type="match status" value="2"/>
</dbReference>
<dbReference type="Gene3D" id="3.30.1370.10">
    <property type="entry name" value="K Homology domain, type 1"/>
    <property type="match status" value="1"/>
</dbReference>
<dbReference type="Gene3D" id="2.40.50.140">
    <property type="entry name" value="Nucleic acid-binding proteins"/>
    <property type="match status" value="1"/>
</dbReference>
<dbReference type="HAMAP" id="MF_01595">
    <property type="entry name" value="PNPase"/>
    <property type="match status" value="1"/>
</dbReference>
<dbReference type="InterPro" id="IPR001247">
    <property type="entry name" value="ExoRNase_PH_dom1"/>
</dbReference>
<dbReference type="InterPro" id="IPR015847">
    <property type="entry name" value="ExoRNase_PH_dom2"/>
</dbReference>
<dbReference type="InterPro" id="IPR036345">
    <property type="entry name" value="ExoRNase_PH_dom2_sf"/>
</dbReference>
<dbReference type="InterPro" id="IPR004087">
    <property type="entry name" value="KH_dom"/>
</dbReference>
<dbReference type="InterPro" id="IPR004088">
    <property type="entry name" value="KH_dom_type_1"/>
</dbReference>
<dbReference type="InterPro" id="IPR036612">
    <property type="entry name" value="KH_dom_type_1_sf"/>
</dbReference>
<dbReference type="InterPro" id="IPR012340">
    <property type="entry name" value="NA-bd_OB-fold"/>
</dbReference>
<dbReference type="InterPro" id="IPR012162">
    <property type="entry name" value="PNPase"/>
</dbReference>
<dbReference type="InterPro" id="IPR027408">
    <property type="entry name" value="PNPase/RNase_PH_dom_sf"/>
</dbReference>
<dbReference type="InterPro" id="IPR015848">
    <property type="entry name" value="PNPase_PH_RNA-bd_bac/org-type"/>
</dbReference>
<dbReference type="InterPro" id="IPR020568">
    <property type="entry name" value="Ribosomal_Su5_D2-typ_SF"/>
</dbReference>
<dbReference type="InterPro" id="IPR003029">
    <property type="entry name" value="S1_domain"/>
</dbReference>
<dbReference type="NCBIfam" id="TIGR03591">
    <property type="entry name" value="polynuc_phos"/>
    <property type="match status" value="1"/>
</dbReference>
<dbReference type="NCBIfam" id="NF008805">
    <property type="entry name" value="PRK11824.1"/>
    <property type="match status" value="1"/>
</dbReference>
<dbReference type="PANTHER" id="PTHR11252">
    <property type="entry name" value="POLYRIBONUCLEOTIDE NUCLEOTIDYLTRANSFERASE"/>
    <property type="match status" value="1"/>
</dbReference>
<dbReference type="PANTHER" id="PTHR11252:SF0">
    <property type="entry name" value="POLYRIBONUCLEOTIDE NUCLEOTIDYLTRANSFERASE 1, MITOCHONDRIAL"/>
    <property type="match status" value="1"/>
</dbReference>
<dbReference type="Pfam" id="PF00013">
    <property type="entry name" value="KH_1"/>
    <property type="match status" value="1"/>
</dbReference>
<dbReference type="Pfam" id="PF03726">
    <property type="entry name" value="PNPase"/>
    <property type="match status" value="1"/>
</dbReference>
<dbReference type="Pfam" id="PF01138">
    <property type="entry name" value="RNase_PH"/>
    <property type="match status" value="2"/>
</dbReference>
<dbReference type="Pfam" id="PF03725">
    <property type="entry name" value="RNase_PH_C"/>
    <property type="match status" value="2"/>
</dbReference>
<dbReference type="Pfam" id="PF00575">
    <property type="entry name" value="S1"/>
    <property type="match status" value="1"/>
</dbReference>
<dbReference type="PIRSF" id="PIRSF005499">
    <property type="entry name" value="PNPase"/>
    <property type="match status" value="1"/>
</dbReference>
<dbReference type="SMART" id="SM00322">
    <property type="entry name" value="KH"/>
    <property type="match status" value="1"/>
</dbReference>
<dbReference type="SMART" id="SM00316">
    <property type="entry name" value="S1"/>
    <property type="match status" value="1"/>
</dbReference>
<dbReference type="SUPFAM" id="SSF54791">
    <property type="entry name" value="Eukaryotic type KH-domain (KH-domain type I)"/>
    <property type="match status" value="1"/>
</dbReference>
<dbReference type="SUPFAM" id="SSF50249">
    <property type="entry name" value="Nucleic acid-binding proteins"/>
    <property type="match status" value="1"/>
</dbReference>
<dbReference type="SUPFAM" id="SSF55666">
    <property type="entry name" value="Ribonuclease PH domain 2-like"/>
    <property type="match status" value="2"/>
</dbReference>
<dbReference type="SUPFAM" id="SSF54211">
    <property type="entry name" value="Ribosomal protein S5 domain 2-like"/>
    <property type="match status" value="2"/>
</dbReference>
<dbReference type="PROSITE" id="PS50084">
    <property type="entry name" value="KH_TYPE_1"/>
    <property type="match status" value="1"/>
</dbReference>
<dbReference type="PROSITE" id="PS50126">
    <property type="entry name" value="S1"/>
    <property type="match status" value="1"/>
</dbReference>
<keyword id="KW-0963">Cytoplasm</keyword>
<keyword id="KW-0460">Magnesium</keyword>
<keyword id="KW-0479">Metal-binding</keyword>
<keyword id="KW-0548">Nucleotidyltransferase</keyword>
<keyword id="KW-1185">Reference proteome</keyword>
<keyword id="KW-0694">RNA-binding</keyword>
<keyword id="KW-0808">Transferase</keyword>
<proteinExistence type="inferred from homology"/>
<gene>
    <name evidence="1" type="primary">pnp</name>
    <name type="ordered locus">CV_1466</name>
</gene>
<feature type="chain" id="PRO_0000329589" description="Polyribonucleotide nucleotidyltransferase">
    <location>
        <begin position="1"/>
        <end position="722"/>
    </location>
</feature>
<feature type="domain" description="KH" evidence="1">
    <location>
        <begin position="561"/>
        <end position="620"/>
    </location>
</feature>
<feature type="domain" description="S1 motif" evidence="1">
    <location>
        <begin position="630"/>
        <end position="700"/>
    </location>
</feature>
<feature type="binding site" evidence="1">
    <location>
        <position position="495"/>
    </location>
    <ligand>
        <name>Mg(2+)</name>
        <dbReference type="ChEBI" id="CHEBI:18420"/>
    </ligand>
</feature>
<feature type="binding site" evidence="1">
    <location>
        <position position="501"/>
    </location>
    <ligand>
        <name>Mg(2+)</name>
        <dbReference type="ChEBI" id="CHEBI:18420"/>
    </ligand>
</feature>
<reference key="1">
    <citation type="journal article" date="2003" name="Proc. Natl. Acad. Sci. U.S.A.">
        <title>The complete genome sequence of Chromobacterium violaceum reveals remarkable and exploitable bacterial adaptability.</title>
        <authorList>
            <person name="Vasconcelos A.T.R."/>
            <person name="de Almeida D.F."/>
            <person name="Hungria M."/>
            <person name="Guimaraes C.T."/>
            <person name="Antonio R.V."/>
            <person name="Almeida F.C."/>
            <person name="de Almeida L.G.P."/>
            <person name="de Almeida R."/>
            <person name="Alves-Gomes J.A."/>
            <person name="Andrade E.M."/>
            <person name="Araripe J."/>
            <person name="de Araujo M.F.F."/>
            <person name="Astolfi-Filho S."/>
            <person name="Azevedo V."/>
            <person name="Baptista A.J."/>
            <person name="Bataus L.A.M."/>
            <person name="Batista J.S."/>
            <person name="Belo A."/>
            <person name="van den Berg C."/>
            <person name="Bogo M."/>
            <person name="Bonatto S."/>
            <person name="Bordignon J."/>
            <person name="Brigido M.M."/>
            <person name="Brito C.A."/>
            <person name="Brocchi M."/>
            <person name="Burity H.A."/>
            <person name="Camargo A.A."/>
            <person name="Cardoso D.D.P."/>
            <person name="Carneiro N.P."/>
            <person name="Carraro D.M."/>
            <person name="Carvalho C.M.B."/>
            <person name="Cascardo J.C.M."/>
            <person name="Cavada B.S."/>
            <person name="Chueire L.M.O."/>
            <person name="Creczynski-Pasa T.B."/>
            <person name="Cunha-Junior N.C."/>
            <person name="Fagundes N."/>
            <person name="Falcao C.L."/>
            <person name="Fantinatti F."/>
            <person name="Farias I.P."/>
            <person name="Felipe M.S.S."/>
            <person name="Ferrari L.P."/>
            <person name="Ferro J.A."/>
            <person name="Ferro M.I.T."/>
            <person name="Franco G.R."/>
            <person name="Freitas N.S.A."/>
            <person name="Furlan L.R."/>
            <person name="Gazzinelli R.T."/>
            <person name="Gomes E.A."/>
            <person name="Goncalves P.R."/>
            <person name="Grangeiro T.B."/>
            <person name="Grattapaglia D."/>
            <person name="Grisard E.C."/>
            <person name="Hanna E.S."/>
            <person name="Jardim S.N."/>
            <person name="Laurino J."/>
            <person name="Leoi L.C.T."/>
            <person name="Lima L.F.A."/>
            <person name="Loureiro M.F."/>
            <person name="Lyra M.C.C.P."/>
            <person name="Madeira H.M.F."/>
            <person name="Manfio G.P."/>
            <person name="Maranhao A.Q."/>
            <person name="Martins W.S."/>
            <person name="di Mauro S.M.Z."/>
            <person name="de Medeiros S.R.B."/>
            <person name="Meissner R.V."/>
            <person name="Moreira M.A.M."/>
            <person name="Nascimento F.F."/>
            <person name="Nicolas M.F."/>
            <person name="Oliveira J.G."/>
            <person name="Oliveira S.C."/>
            <person name="Paixao R.F.C."/>
            <person name="Parente J.A."/>
            <person name="Pedrosa F.O."/>
            <person name="Pena S.D.J."/>
            <person name="Pereira J.O."/>
            <person name="Pereira M."/>
            <person name="Pinto L.S.R.C."/>
            <person name="Pinto L.S."/>
            <person name="Porto J.I.R."/>
            <person name="Potrich D.P."/>
            <person name="Ramalho-Neto C.E."/>
            <person name="Reis A.M.M."/>
            <person name="Rigo L.U."/>
            <person name="Rondinelli E."/>
            <person name="Santos E.B.P."/>
            <person name="Santos F.R."/>
            <person name="Schneider M.P.C."/>
            <person name="Seuanez H.N."/>
            <person name="Silva A.M.R."/>
            <person name="da Silva A.L.C."/>
            <person name="Silva D.W."/>
            <person name="Silva R."/>
            <person name="Simoes I.C."/>
            <person name="Simon D."/>
            <person name="Soares C.M.A."/>
            <person name="Soares R.B.A."/>
            <person name="Souza E.M."/>
            <person name="Souza K.R.L."/>
            <person name="Souza R.C."/>
            <person name="Steffens M.B.R."/>
            <person name="Steindel M."/>
            <person name="Teixeira S.R."/>
            <person name="Urmenyi T."/>
            <person name="Vettore A."/>
            <person name="Wassem R."/>
            <person name="Zaha A."/>
            <person name="Simpson A.J.G."/>
        </authorList>
    </citation>
    <scope>NUCLEOTIDE SEQUENCE [LARGE SCALE GENOMIC DNA]</scope>
    <source>
        <strain>ATCC 12472 / DSM 30191 / JCM 1249 / CCUG 213 / NBRC 12614 / NCIMB 9131 / NCTC 9757 / MK</strain>
    </source>
</reference>
<protein>
    <recommendedName>
        <fullName evidence="1">Polyribonucleotide nucleotidyltransferase</fullName>
        <ecNumber evidence="1">2.7.7.8</ecNumber>
    </recommendedName>
    <alternativeName>
        <fullName evidence="1">Polynucleotide phosphorylase</fullName>
        <shortName evidence="1">PNPase</shortName>
    </alternativeName>
</protein>
<organism>
    <name type="scientific">Chromobacterium violaceum (strain ATCC 12472 / DSM 30191 / JCM 1249 / CCUG 213 / NBRC 12614 / NCIMB 9131 / NCTC 9757 / MK)</name>
    <dbReference type="NCBI Taxonomy" id="243365"/>
    <lineage>
        <taxon>Bacteria</taxon>
        <taxon>Pseudomonadati</taxon>
        <taxon>Pseudomonadota</taxon>
        <taxon>Betaproteobacteria</taxon>
        <taxon>Neisseriales</taxon>
        <taxon>Chromobacteriaceae</taxon>
        <taxon>Chromobacterium</taxon>
    </lineage>
</organism>
<name>PNP_CHRVO</name>
<sequence>MNQDRETLVFNKITKTFQFGRQTVTLETGEIARQASGSVVVSVDDTVVMVSVVGGKNVKPGQDFFPLTVDYLERTYAAGKIPGGFFKREGKQSEKEVLTSRLIDRPIRPLFPEGFYHDVQIVATVLSLNPEVDSDIPAMIGASAALAISGLPFAGPIGAARVGYANGEYILNPTKTELQTSQMDLVVAGTSRAVLMVESEAKELPEAVMLGAVVFGHEQMQAAIKAINELADEVNPVMFDWAAPAKDEALIAQIRGIAGEKLAEAFRLRQKQARTVAINEAWDAVKAGLINEETDTLKANEIKGIFKSLEAEIVRGQILAGEARIDGRDTRTVRPISIRNNVLPRTHGSALFTRGETQALVVATLGTKQDEQIIDALAGEYTERFMLHYNFPPYSTGEAGRMGPPKRREIGHGRLAKRALVAVLPPEDEFGYSMRVVSEITESNGSSSMASVCGGCLSLLSAGVPLKAHVAGIAMGLILEGNRFAVLTDILGDEDHLGDMDFKVAGTAAGVTALQMDIKIQGITKEIMQVALEQAKEGRLHILGLMKEAVDGPQELSAHAPRLYVMKINPEKIREVIGKGGETIRSITKDTGCEINIEEDGTITIASVSSEGAEAAKKRIEEITVEVEVGKVYEGTVVKILDNNVGAIVSILPGKDGLVHISQIANERIKNVSDYLKEGQVVKVKAIEMDDRGRIRLSIKALLEEEAKTAQATADAFGLKTQ</sequence>
<comment type="function">
    <text evidence="1">Involved in mRNA degradation. Catalyzes the phosphorolysis of single-stranded polyribonucleotides processively in the 3'- to 5'-direction.</text>
</comment>
<comment type="catalytic activity">
    <reaction evidence="1">
        <text>RNA(n+1) + phosphate = RNA(n) + a ribonucleoside 5'-diphosphate</text>
        <dbReference type="Rhea" id="RHEA:22096"/>
        <dbReference type="Rhea" id="RHEA-COMP:14527"/>
        <dbReference type="Rhea" id="RHEA-COMP:17342"/>
        <dbReference type="ChEBI" id="CHEBI:43474"/>
        <dbReference type="ChEBI" id="CHEBI:57930"/>
        <dbReference type="ChEBI" id="CHEBI:140395"/>
        <dbReference type="EC" id="2.7.7.8"/>
    </reaction>
</comment>
<comment type="cofactor">
    <cofactor evidence="1">
        <name>Mg(2+)</name>
        <dbReference type="ChEBI" id="CHEBI:18420"/>
    </cofactor>
</comment>
<comment type="subcellular location">
    <subcellularLocation>
        <location evidence="1">Cytoplasm</location>
    </subcellularLocation>
</comment>
<comment type="similarity">
    <text evidence="1">Belongs to the polyribonucleotide nucleotidyltransferase family.</text>
</comment>
<evidence type="ECO:0000255" key="1">
    <source>
        <dbReference type="HAMAP-Rule" id="MF_01595"/>
    </source>
</evidence>
<accession>Q7NY10</accession>